<sequence>MFDFLPSSLQVTLPILFKIVAIVLPLILIVAWLTFAERKIIGYMQGRIGPNRVGPRGWLQPIADTVKLLLKEIIIPASANRILFLLAPVLAIAPALAVWAVIPFDAHLVLADINAALLYILAIGSMSVYGIILAGWASNSKYAFLGAMRSAAQVVSYEIAMGFALVGVLIAGGSLNLGEIVQAQEGGFWHWFWLPLFPLFLIYFISGVAETNRLPFDVAEGESEIVAGFHVEYSGMAFALFFLAEYIEMILVSTLAALMFLGGWLSPFQGTVLEAIFEWVPGIVWLLIKTAIFLFFYLWFRATFPRYRYDQIMRLGWKVFIPITIVWLLVVGGARVAQLGPWFT</sequence>
<evidence type="ECO:0000255" key="1">
    <source>
        <dbReference type="HAMAP-Rule" id="MF_01350"/>
    </source>
</evidence>
<keyword id="KW-0997">Cell inner membrane</keyword>
<keyword id="KW-1003">Cell membrane</keyword>
<keyword id="KW-0472">Membrane</keyword>
<keyword id="KW-0520">NAD</keyword>
<keyword id="KW-0874">Quinone</keyword>
<keyword id="KW-1185">Reference proteome</keyword>
<keyword id="KW-1278">Translocase</keyword>
<keyword id="KW-0812">Transmembrane</keyword>
<keyword id="KW-1133">Transmembrane helix</keyword>
<keyword id="KW-0830">Ubiquinone</keyword>
<reference key="1">
    <citation type="journal article" date="2006" name="Appl. Environ. Microbiol.">
        <title>Complete genome sequence of the marine, chemolithoautotrophic, ammonia-oxidizing bacterium Nitrosococcus oceani ATCC 19707.</title>
        <authorList>
            <person name="Klotz M.G."/>
            <person name="Arp D.J."/>
            <person name="Chain P.S.G."/>
            <person name="El-Sheikh A.F."/>
            <person name="Hauser L.J."/>
            <person name="Hommes N.G."/>
            <person name="Larimer F.W."/>
            <person name="Malfatti S.A."/>
            <person name="Norton J.M."/>
            <person name="Poret-Peterson A.T."/>
            <person name="Vergez L.M."/>
            <person name="Ward B.B."/>
        </authorList>
    </citation>
    <scope>NUCLEOTIDE SEQUENCE [LARGE SCALE GENOMIC DNA]</scope>
    <source>
        <strain>ATCC 19707 / BCRC 17464 / JCM 30415 / NCIMB 11848 / C-107</strain>
    </source>
</reference>
<organism>
    <name type="scientific">Nitrosococcus oceani (strain ATCC 19707 / BCRC 17464 / JCM 30415 / NCIMB 11848 / C-107)</name>
    <dbReference type="NCBI Taxonomy" id="323261"/>
    <lineage>
        <taxon>Bacteria</taxon>
        <taxon>Pseudomonadati</taxon>
        <taxon>Pseudomonadota</taxon>
        <taxon>Gammaproteobacteria</taxon>
        <taxon>Chromatiales</taxon>
        <taxon>Chromatiaceae</taxon>
        <taxon>Nitrosococcus</taxon>
    </lineage>
</organism>
<dbReference type="EC" id="7.1.1.-" evidence="1"/>
<dbReference type="EMBL" id="CP000127">
    <property type="protein sequence ID" value="ABA59011.1"/>
    <property type="molecule type" value="Genomic_DNA"/>
</dbReference>
<dbReference type="SMR" id="Q3J835"/>
<dbReference type="STRING" id="323261.Noc_2558"/>
<dbReference type="KEGG" id="noc:Noc_2558"/>
<dbReference type="eggNOG" id="COG1005">
    <property type="taxonomic scope" value="Bacteria"/>
</dbReference>
<dbReference type="HOGENOM" id="CLU_015134_0_1_6"/>
<dbReference type="InParanoid" id="Q3J835"/>
<dbReference type="Proteomes" id="UP000006838">
    <property type="component" value="Chromosome"/>
</dbReference>
<dbReference type="GO" id="GO:0005886">
    <property type="term" value="C:plasma membrane"/>
    <property type="evidence" value="ECO:0007669"/>
    <property type="project" value="UniProtKB-SubCell"/>
</dbReference>
<dbReference type="GO" id="GO:0003954">
    <property type="term" value="F:NADH dehydrogenase activity"/>
    <property type="evidence" value="ECO:0007669"/>
    <property type="project" value="TreeGrafter"/>
</dbReference>
<dbReference type="GO" id="GO:0016655">
    <property type="term" value="F:oxidoreductase activity, acting on NAD(P)H, quinone or similar compound as acceptor"/>
    <property type="evidence" value="ECO:0007669"/>
    <property type="project" value="UniProtKB-UniRule"/>
</dbReference>
<dbReference type="GO" id="GO:0048038">
    <property type="term" value="F:quinone binding"/>
    <property type="evidence" value="ECO:0007669"/>
    <property type="project" value="UniProtKB-KW"/>
</dbReference>
<dbReference type="GO" id="GO:0009060">
    <property type="term" value="P:aerobic respiration"/>
    <property type="evidence" value="ECO:0007669"/>
    <property type="project" value="TreeGrafter"/>
</dbReference>
<dbReference type="HAMAP" id="MF_01350">
    <property type="entry name" value="NDH1_NuoH"/>
    <property type="match status" value="1"/>
</dbReference>
<dbReference type="InterPro" id="IPR001694">
    <property type="entry name" value="NADH_UbQ_OxRdtase_su1/FPO"/>
</dbReference>
<dbReference type="InterPro" id="IPR018086">
    <property type="entry name" value="NADH_UbQ_OxRdtase_su1_CS"/>
</dbReference>
<dbReference type="NCBIfam" id="NF004741">
    <property type="entry name" value="PRK06076.1-2"/>
    <property type="match status" value="1"/>
</dbReference>
<dbReference type="PANTHER" id="PTHR11432">
    <property type="entry name" value="NADH DEHYDROGENASE SUBUNIT 1"/>
    <property type="match status" value="1"/>
</dbReference>
<dbReference type="PANTHER" id="PTHR11432:SF3">
    <property type="entry name" value="NADH-UBIQUINONE OXIDOREDUCTASE CHAIN 1"/>
    <property type="match status" value="1"/>
</dbReference>
<dbReference type="Pfam" id="PF00146">
    <property type="entry name" value="NADHdh"/>
    <property type="match status" value="1"/>
</dbReference>
<dbReference type="PROSITE" id="PS00668">
    <property type="entry name" value="COMPLEX1_ND1_2"/>
    <property type="match status" value="1"/>
</dbReference>
<gene>
    <name evidence="1" type="primary">nuoH2</name>
    <name type="ordered locus">Noc_2558</name>
</gene>
<protein>
    <recommendedName>
        <fullName evidence="1">NADH-quinone oxidoreductase subunit H 2</fullName>
        <ecNumber evidence="1">7.1.1.-</ecNumber>
    </recommendedName>
    <alternativeName>
        <fullName evidence="1">NADH dehydrogenase I subunit H 2</fullName>
    </alternativeName>
    <alternativeName>
        <fullName evidence="1">NDH-1 subunit H 2</fullName>
    </alternativeName>
</protein>
<comment type="function">
    <text evidence="1">NDH-1 shuttles electrons from NADH, via FMN and iron-sulfur (Fe-S) centers, to quinones in the respiratory chain. The immediate electron acceptor for the enzyme in this species is believed to be ubiquinone. Couples the redox reaction to proton translocation (for every two electrons transferred, four hydrogen ions are translocated across the cytoplasmic membrane), and thus conserves the redox energy in a proton gradient. This subunit may bind ubiquinone.</text>
</comment>
<comment type="catalytic activity">
    <reaction evidence="1">
        <text>a quinone + NADH + 5 H(+)(in) = a quinol + NAD(+) + 4 H(+)(out)</text>
        <dbReference type="Rhea" id="RHEA:57888"/>
        <dbReference type="ChEBI" id="CHEBI:15378"/>
        <dbReference type="ChEBI" id="CHEBI:24646"/>
        <dbReference type="ChEBI" id="CHEBI:57540"/>
        <dbReference type="ChEBI" id="CHEBI:57945"/>
        <dbReference type="ChEBI" id="CHEBI:132124"/>
    </reaction>
</comment>
<comment type="subunit">
    <text evidence="1">NDH-1 is composed of 14 different subunits. Subunits NuoA, H, J, K, L, M, N constitute the membrane sector of the complex.</text>
</comment>
<comment type="subcellular location">
    <subcellularLocation>
        <location evidence="1">Cell inner membrane</location>
        <topology evidence="1">Multi-pass membrane protein</topology>
    </subcellularLocation>
</comment>
<comment type="similarity">
    <text evidence="1">Belongs to the complex I subunit 1 family.</text>
</comment>
<feature type="chain" id="PRO_0000240091" description="NADH-quinone oxidoreductase subunit H 2">
    <location>
        <begin position="1"/>
        <end position="344"/>
    </location>
</feature>
<feature type="transmembrane region" description="Helical" evidence="1">
    <location>
        <begin position="13"/>
        <end position="33"/>
    </location>
</feature>
<feature type="transmembrane region" description="Helical" evidence="1">
    <location>
        <begin position="82"/>
        <end position="102"/>
    </location>
</feature>
<feature type="transmembrane region" description="Helical" evidence="1">
    <location>
        <begin position="116"/>
        <end position="136"/>
    </location>
</feature>
<feature type="transmembrane region" description="Helical" evidence="1">
    <location>
        <begin position="161"/>
        <end position="181"/>
    </location>
</feature>
<feature type="transmembrane region" description="Helical" evidence="1">
    <location>
        <begin position="188"/>
        <end position="208"/>
    </location>
</feature>
<feature type="transmembrane region" description="Helical" evidence="1">
    <location>
        <begin position="240"/>
        <end position="260"/>
    </location>
</feature>
<feature type="transmembrane region" description="Helical" evidence="1">
    <location>
        <begin position="280"/>
        <end position="300"/>
    </location>
</feature>
<feature type="transmembrane region" description="Helical" evidence="1">
    <location>
        <begin position="319"/>
        <end position="339"/>
    </location>
</feature>
<accession>Q3J835</accession>
<proteinExistence type="inferred from homology"/>
<name>NUOH2_NITOC</name>